<proteinExistence type="evidence at protein level"/>
<feature type="chain" id="PRO_0000184756" description="Pyrrolidone-carboxylate peptidase">
    <location>
        <begin position="1"/>
        <end position="206"/>
    </location>
</feature>
<feature type="active site" evidence="1">
    <location>
        <position position="76"/>
    </location>
</feature>
<feature type="active site" evidence="1">
    <location>
        <position position="139"/>
    </location>
</feature>
<feature type="active site" evidence="1">
    <location>
        <position position="163"/>
    </location>
</feature>
<feature type="strand" evidence="3">
    <location>
        <begin position="3"/>
        <end position="8"/>
    </location>
</feature>
<feature type="helix" evidence="3">
    <location>
        <begin position="18"/>
        <end position="29"/>
    </location>
</feature>
<feature type="strand" evidence="3">
    <location>
        <begin position="33"/>
        <end position="38"/>
    </location>
</feature>
<feature type="helix" evidence="3">
    <location>
        <begin position="42"/>
        <end position="56"/>
    </location>
</feature>
<feature type="strand" evidence="3">
    <location>
        <begin position="59"/>
        <end position="66"/>
    </location>
</feature>
<feature type="strand" evidence="3">
    <location>
        <begin position="71"/>
        <end position="76"/>
    </location>
</feature>
<feature type="strand" evidence="3">
    <location>
        <begin position="78"/>
        <end position="81"/>
    </location>
</feature>
<feature type="strand" evidence="3">
    <location>
        <begin position="96"/>
        <end position="98"/>
    </location>
</feature>
<feature type="strand" evidence="3">
    <location>
        <begin position="106"/>
        <end position="109"/>
    </location>
</feature>
<feature type="helix" evidence="3">
    <location>
        <begin position="114"/>
        <end position="123"/>
    </location>
</feature>
<feature type="strand" evidence="3">
    <location>
        <begin position="128"/>
        <end position="132"/>
    </location>
</feature>
<feature type="helix" evidence="3">
    <location>
        <begin position="138"/>
        <end position="153"/>
    </location>
</feature>
<feature type="strand" evidence="3">
    <location>
        <begin position="156"/>
        <end position="164"/>
    </location>
</feature>
<feature type="helix" evidence="3">
    <location>
        <begin position="168"/>
        <end position="170"/>
    </location>
</feature>
<feature type="helix" evidence="3">
    <location>
        <begin position="182"/>
        <end position="202"/>
    </location>
</feature>
<feature type="turn" evidence="3">
    <location>
        <begin position="203"/>
        <end position="205"/>
    </location>
</feature>
<name>PCP_PYRHO</name>
<comment type="function">
    <text>Removes 5-oxoproline from various penultimate amino acid residues except L-proline.</text>
</comment>
<comment type="catalytic activity">
    <reaction>
        <text>Release of an N-terminal pyroglutamyl group from a polypeptide, the second amino acid generally not being Pro.</text>
        <dbReference type="EC" id="3.4.19.3"/>
    </reaction>
</comment>
<comment type="subunit">
    <text evidence="1">Homotetramer.</text>
</comment>
<comment type="subcellular location">
    <subcellularLocation>
        <location>Cytoplasm</location>
    </subcellularLocation>
</comment>
<comment type="similarity">
    <text evidence="2">Belongs to the peptidase C15 family.</text>
</comment>
<dbReference type="EC" id="3.4.19.3"/>
<dbReference type="EMBL" id="BA000001">
    <property type="protein sequence ID" value="BAA29685.1"/>
    <property type="molecule type" value="Genomic_DNA"/>
</dbReference>
<dbReference type="PIR" id="H71174">
    <property type="entry name" value="H71174"/>
</dbReference>
<dbReference type="PDB" id="1IU8">
    <property type="method" value="X-ray"/>
    <property type="resolution" value="1.60 A"/>
    <property type="chains" value="A/B=1-206"/>
</dbReference>
<dbReference type="PDBsum" id="1IU8"/>
<dbReference type="SMR" id="O58321"/>
<dbReference type="MINT" id="O58321"/>
<dbReference type="STRING" id="70601.gene:9377536"/>
<dbReference type="MEROPS" id="C15.001"/>
<dbReference type="EnsemblBacteria" id="BAA29685">
    <property type="protein sequence ID" value="BAA29685"/>
    <property type="gene ID" value="BAA29685"/>
</dbReference>
<dbReference type="KEGG" id="pho:PH0596"/>
<dbReference type="eggNOG" id="arCOG05850">
    <property type="taxonomic scope" value="Archaea"/>
</dbReference>
<dbReference type="BRENDA" id="3.4.19.3">
    <property type="organism ID" value="5244"/>
</dbReference>
<dbReference type="EvolutionaryTrace" id="O58321"/>
<dbReference type="Proteomes" id="UP000000752">
    <property type="component" value="Chromosome"/>
</dbReference>
<dbReference type="GO" id="GO:0005829">
    <property type="term" value="C:cytosol"/>
    <property type="evidence" value="ECO:0007669"/>
    <property type="project" value="InterPro"/>
</dbReference>
<dbReference type="GO" id="GO:0016920">
    <property type="term" value="F:pyroglutamyl-peptidase activity"/>
    <property type="evidence" value="ECO:0007669"/>
    <property type="project" value="UniProtKB-UniRule"/>
</dbReference>
<dbReference type="GO" id="GO:0006508">
    <property type="term" value="P:proteolysis"/>
    <property type="evidence" value="ECO:0007669"/>
    <property type="project" value="UniProtKB-KW"/>
</dbReference>
<dbReference type="CDD" id="cd00501">
    <property type="entry name" value="Peptidase_C15"/>
    <property type="match status" value="1"/>
</dbReference>
<dbReference type="FunFam" id="3.40.630.20:FF:000001">
    <property type="entry name" value="Pyrrolidone-carboxylate peptidase"/>
    <property type="match status" value="1"/>
</dbReference>
<dbReference type="Gene3D" id="3.40.630.20">
    <property type="entry name" value="Peptidase C15, pyroglutamyl peptidase I-like"/>
    <property type="match status" value="1"/>
</dbReference>
<dbReference type="HAMAP" id="MF_00417">
    <property type="entry name" value="Pyrrolid_peptidase"/>
    <property type="match status" value="1"/>
</dbReference>
<dbReference type="InterPro" id="IPR000816">
    <property type="entry name" value="Peptidase_C15"/>
</dbReference>
<dbReference type="InterPro" id="IPR016125">
    <property type="entry name" value="Peptidase_C15-like"/>
</dbReference>
<dbReference type="InterPro" id="IPR036440">
    <property type="entry name" value="Peptidase_C15-like_sf"/>
</dbReference>
<dbReference type="InterPro" id="IPR029762">
    <property type="entry name" value="PGP-I_bact-type"/>
</dbReference>
<dbReference type="InterPro" id="IPR033694">
    <property type="entry name" value="PGPEP1_Cys_AS"/>
</dbReference>
<dbReference type="InterPro" id="IPR033693">
    <property type="entry name" value="PGPEP1_Glu_AS"/>
</dbReference>
<dbReference type="NCBIfam" id="NF009673">
    <property type="entry name" value="PRK13194.1"/>
    <property type="match status" value="1"/>
</dbReference>
<dbReference type="NCBIfam" id="NF009676">
    <property type="entry name" value="PRK13197.1"/>
    <property type="match status" value="1"/>
</dbReference>
<dbReference type="NCBIfam" id="TIGR00504">
    <property type="entry name" value="pyro_pdase"/>
    <property type="match status" value="1"/>
</dbReference>
<dbReference type="PANTHER" id="PTHR23402">
    <property type="entry name" value="PROTEASE FAMILY C15 PYROGLUTAMYL-PEPTIDASE I-RELATED"/>
    <property type="match status" value="1"/>
</dbReference>
<dbReference type="PANTHER" id="PTHR23402:SF1">
    <property type="entry name" value="PYROGLUTAMYL-PEPTIDASE I"/>
    <property type="match status" value="1"/>
</dbReference>
<dbReference type="Pfam" id="PF01470">
    <property type="entry name" value="Peptidase_C15"/>
    <property type="match status" value="1"/>
</dbReference>
<dbReference type="PIRSF" id="PIRSF015592">
    <property type="entry name" value="Prld-crbxl_pptds"/>
    <property type="match status" value="1"/>
</dbReference>
<dbReference type="PRINTS" id="PR00706">
    <property type="entry name" value="PYROGLUPTASE"/>
</dbReference>
<dbReference type="SUPFAM" id="SSF53182">
    <property type="entry name" value="Pyrrolidone carboxyl peptidase (pyroglutamate aminopeptidase)"/>
    <property type="match status" value="1"/>
</dbReference>
<dbReference type="PROSITE" id="PS01334">
    <property type="entry name" value="PYRASE_CYS"/>
    <property type="match status" value="1"/>
</dbReference>
<dbReference type="PROSITE" id="PS01333">
    <property type="entry name" value="PYRASE_GLU"/>
    <property type="match status" value="1"/>
</dbReference>
<protein>
    <recommendedName>
        <fullName>Pyrrolidone-carboxylate peptidase</fullName>
        <ecNumber>3.4.19.3</ecNumber>
    </recommendedName>
    <alternativeName>
        <fullName>5-oxoprolyl-peptidase</fullName>
    </alternativeName>
    <alternativeName>
        <fullName>Pyroglutamyl-peptidase I</fullName>
        <shortName>PGP-I</shortName>
        <shortName>Pyrase</shortName>
    </alternativeName>
</protein>
<keyword id="KW-0002">3D-structure</keyword>
<keyword id="KW-0963">Cytoplasm</keyword>
<keyword id="KW-0378">Hydrolase</keyword>
<keyword id="KW-0645">Protease</keyword>
<keyword id="KW-0788">Thiol protease</keyword>
<organism>
    <name type="scientific">Pyrococcus horikoshii (strain ATCC 700860 / DSM 12428 / JCM 9974 / NBRC 100139 / OT-3)</name>
    <dbReference type="NCBI Taxonomy" id="70601"/>
    <lineage>
        <taxon>Archaea</taxon>
        <taxon>Methanobacteriati</taxon>
        <taxon>Methanobacteriota</taxon>
        <taxon>Thermococci</taxon>
        <taxon>Thermococcales</taxon>
        <taxon>Thermococcaceae</taxon>
        <taxon>Pyrococcus</taxon>
    </lineage>
</organism>
<accession>O58321</accession>
<gene>
    <name type="primary">pcp</name>
    <name type="ordered locus">PH0596</name>
</gene>
<evidence type="ECO:0000250" key="1"/>
<evidence type="ECO:0000305" key="2"/>
<evidence type="ECO:0007829" key="3">
    <source>
        <dbReference type="PDB" id="1IU8"/>
    </source>
</evidence>
<reference key="1">
    <citation type="journal article" date="1998" name="DNA Res.">
        <title>Complete sequence and gene organization of the genome of a hyper-thermophilic archaebacterium, Pyrococcus horikoshii OT3.</title>
        <authorList>
            <person name="Kawarabayasi Y."/>
            <person name="Sawada M."/>
            <person name="Horikawa H."/>
            <person name="Haikawa Y."/>
            <person name="Hino Y."/>
            <person name="Yamamoto S."/>
            <person name="Sekine M."/>
            <person name="Baba S."/>
            <person name="Kosugi H."/>
            <person name="Hosoyama A."/>
            <person name="Nagai Y."/>
            <person name="Sakai M."/>
            <person name="Ogura K."/>
            <person name="Otsuka R."/>
            <person name="Nakazawa H."/>
            <person name="Takamiya M."/>
            <person name="Ohfuku Y."/>
            <person name="Funahashi T."/>
            <person name="Tanaka T."/>
            <person name="Kudoh Y."/>
            <person name="Yamazaki J."/>
            <person name="Kushida N."/>
            <person name="Oguchi A."/>
            <person name="Aoki K."/>
            <person name="Yoshizawa T."/>
            <person name="Nakamura Y."/>
            <person name="Robb F.T."/>
            <person name="Horikoshi K."/>
            <person name="Masuchi Y."/>
            <person name="Shizuya H."/>
            <person name="Kikuchi H."/>
        </authorList>
    </citation>
    <scope>NUCLEOTIDE SEQUENCE [LARGE SCALE GENOMIC DNA]</scope>
    <source>
        <strain>ATCC 700860 / DSM 12428 / JCM 9974 / NBRC 100139 / OT-3</strain>
    </source>
</reference>
<reference key="2">
    <citation type="journal article" date="2002" name="J. Struct. Funct. Genomics">
        <title>The X-ray crystal structure of pyrrolidone-carboxylate peptidase from hyperthermophilic archaea Pyrococcus horikoshii.</title>
        <authorList>
            <person name="Sokabe M."/>
            <person name="Kawamura T."/>
            <person name="Sakai N."/>
            <person name="Yao M."/>
            <person name="Watanabe N."/>
            <person name="Tanaka I."/>
        </authorList>
    </citation>
    <scope>X-RAY CRYSTALLOGRAPHY (1.6 ANGSTROMS)</scope>
</reference>
<sequence length="206" mass="22640">MKILLTGFEPFGGDDKNPTMDIVEALSERIPEVVGEILPVSFKRAREKLLKVLDDVRPDITINLGLAPGRTHISVERVAVNMIDARIPDNDGEQPKDEPIVEGGPAAYFATIPTREIVEEMKKNGIPAVLSYTAGTYLCNFAMYLTLHTSATKGYPKIAGFIHVPYTPDQVLEKKNTPSMSLDLEIKGVEIAIRVAQSALHSSQLR</sequence>